<name>YSW4_CAEEL</name>
<proteinExistence type="evidence at protein level"/>
<accession>Q10019</accession>
<gene>
    <name type="ORF">T25D10.4</name>
</gene>
<feature type="chain" id="PRO_0000065480" description="Uncharacterized protein T25D10.4">
    <location>
        <begin position="1"/>
        <end position="246"/>
    </location>
</feature>
<feature type="region of interest" description="Disordered" evidence="1">
    <location>
        <begin position="29"/>
        <end position="54"/>
    </location>
</feature>
<feature type="region of interest" description="Disordered" evidence="1">
    <location>
        <begin position="93"/>
        <end position="114"/>
    </location>
</feature>
<feature type="region of interest" description="Disordered" evidence="1">
    <location>
        <begin position="148"/>
        <end position="246"/>
    </location>
</feature>
<feature type="compositionally biased region" description="Low complexity" evidence="1">
    <location>
        <begin position="35"/>
        <end position="49"/>
    </location>
</feature>
<feature type="compositionally biased region" description="Polar residues" evidence="1">
    <location>
        <begin position="172"/>
        <end position="183"/>
    </location>
</feature>
<feature type="compositionally biased region" description="Low complexity" evidence="1">
    <location>
        <begin position="190"/>
        <end position="203"/>
    </location>
</feature>
<feature type="compositionally biased region" description="Low complexity" evidence="1">
    <location>
        <begin position="214"/>
        <end position="225"/>
    </location>
</feature>
<feature type="compositionally biased region" description="Polar residues" evidence="1">
    <location>
        <begin position="235"/>
        <end position="246"/>
    </location>
</feature>
<feature type="glycosylation site" description="N-linked (GlcNAc...) asparagine" evidence="2 3">
    <location>
        <position position="219"/>
    </location>
</feature>
<organism>
    <name type="scientific">Caenorhabditis elegans</name>
    <dbReference type="NCBI Taxonomy" id="6239"/>
    <lineage>
        <taxon>Eukaryota</taxon>
        <taxon>Metazoa</taxon>
        <taxon>Ecdysozoa</taxon>
        <taxon>Nematoda</taxon>
        <taxon>Chromadorea</taxon>
        <taxon>Rhabditida</taxon>
        <taxon>Rhabditina</taxon>
        <taxon>Rhabditomorpha</taxon>
        <taxon>Rhabditoidea</taxon>
        <taxon>Rhabditidae</taxon>
        <taxon>Peloderinae</taxon>
        <taxon>Caenorhabditis</taxon>
    </lineage>
</organism>
<reference key="1">
    <citation type="journal article" date="1998" name="Science">
        <title>Genome sequence of the nematode C. elegans: a platform for investigating biology.</title>
        <authorList>
            <consortium name="The C. elegans sequencing consortium"/>
        </authorList>
    </citation>
    <scope>NUCLEOTIDE SEQUENCE [LARGE SCALE GENOMIC DNA]</scope>
    <source>
        <strain>Bristol N2</strain>
    </source>
</reference>
<reference key="2">
    <citation type="journal article" date="2003" name="Nat. Biotechnol.">
        <title>Lectin affinity capture, isotope-coded tagging and mass spectrometry to identify N-linked glycoproteins.</title>
        <authorList>
            <person name="Kaji H."/>
            <person name="Saito H."/>
            <person name="Yamauchi Y."/>
            <person name="Shinkawa T."/>
            <person name="Taoka M."/>
            <person name="Hirabayashi J."/>
            <person name="Kasai K."/>
            <person name="Takahashi N."/>
            <person name="Isobe T."/>
        </authorList>
    </citation>
    <scope>GLYCOSYLATION [LARGE SCALE ANALYSIS] AT ASN-219</scope>
    <scope>IDENTIFICATION BY MASS SPECTROMETRY</scope>
    <source>
        <strain>Bristol N2</strain>
    </source>
</reference>
<reference key="3">
    <citation type="journal article" date="2007" name="Mol. Cell. Proteomics">
        <title>Proteomics reveals N-linked glycoprotein diversity in Caenorhabditis elegans and suggests an atypical translocation mechanism for integral membrane proteins.</title>
        <authorList>
            <person name="Kaji H."/>
            <person name="Kamiie J."/>
            <person name="Kawakami H."/>
            <person name="Kido K."/>
            <person name="Yamauchi Y."/>
            <person name="Shinkawa T."/>
            <person name="Taoka M."/>
            <person name="Takahashi N."/>
            <person name="Isobe T."/>
        </authorList>
    </citation>
    <scope>GLYCOSYLATION [LARGE SCALE ANALYSIS] AT ASN-219</scope>
    <scope>IDENTIFICATION BY MASS SPECTROMETRY</scope>
    <source>
        <strain>Bristol N2</strain>
    </source>
</reference>
<sequence>MEDLDAYRAACANRIRRLERYKKARSFCSLETDEPTSSSPSLSSNSDVSQENGSSTFDMIREKMFSLMENDMTLLKQLLQLGDQISEIKKERLRRTMSQNSLEYDEEDEKEDKFDSGFSASMSAVTNLYVDDERPQFFSRQNSVLRIPIPPRSSNRFGPRRVIRRPSDILPRQQTNNIRTLHVNSDDSDSSSSGSKTHSPSSSVYNASTLILPSKTTKNRSSNSSIDSGIRDEQLTPSPTFESVVI</sequence>
<keyword id="KW-0325">Glycoprotein</keyword>
<keyword id="KW-1185">Reference proteome</keyword>
<evidence type="ECO:0000256" key="1">
    <source>
        <dbReference type="SAM" id="MobiDB-lite"/>
    </source>
</evidence>
<evidence type="ECO:0000269" key="2">
    <source>
    </source>
</evidence>
<evidence type="ECO:0000269" key="3">
    <source>
    </source>
</evidence>
<protein>
    <recommendedName>
        <fullName>Uncharacterized protein T25D10.4</fullName>
    </recommendedName>
</protein>
<dbReference type="EMBL" id="FO081506">
    <property type="protein sequence ID" value="CCD72076.1"/>
    <property type="molecule type" value="Genomic_DNA"/>
</dbReference>
<dbReference type="PIR" id="T16941">
    <property type="entry name" value="T16941"/>
</dbReference>
<dbReference type="RefSeq" id="NP_495292.1">
    <property type="nucleotide sequence ID" value="NM_062891.6"/>
</dbReference>
<dbReference type="SMR" id="Q10019"/>
<dbReference type="iPTMnet" id="Q10019"/>
<dbReference type="PaxDb" id="6239-T25D10.4"/>
<dbReference type="EnsemblMetazoa" id="T25D10.4.1">
    <property type="protein sequence ID" value="T25D10.4.1"/>
    <property type="gene ID" value="WBGene00020801"/>
</dbReference>
<dbReference type="GeneID" id="174064"/>
<dbReference type="KEGG" id="cel:CELE_T25D10.4"/>
<dbReference type="UCSC" id="T25D10.4">
    <property type="organism name" value="c. elegans"/>
</dbReference>
<dbReference type="AGR" id="WB:WBGene00020801"/>
<dbReference type="CTD" id="174064"/>
<dbReference type="WormBase" id="T25D10.4">
    <property type="protein sequence ID" value="CE02061"/>
    <property type="gene ID" value="WBGene00020801"/>
</dbReference>
<dbReference type="eggNOG" id="ENOG502SAM4">
    <property type="taxonomic scope" value="Eukaryota"/>
</dbReference>
<dbReference type="HOGENOM" id="CLU_1112162_0_0_1"/>
<dbReference type="InParanoid" id="Q10019"/>
<dbReference type="OMA" id="YRAACAN"/>
<dbReference type="OrthoDB" id="6508726at2759"/>
<dbReference type="PRO" id="PR:Q10019"/>
<dbReference type="Proteomes" id="UP000001940">
    <property type="component" value="Chromosome II"/>
</dbReference>
<dbReference type="Bgee" id="WBGene00020801">
    <property type="expression patterns" value="Expressed in pharyngeal muscle cell (C elegans) and 3 other cell types or tissues"/>
</dbReference>